<name>RL30_SALPA</name>
<protein>
    <recommendedName>
        <fullName evidence="1">Large ribosomal subunit protein uL30</fullName>
    </recommendedName>
    <alternativeName>
        <fullName evidence="2">50S ribosomal protein L30</fullName>
    </alternativeName>
</protein>
<organism>
    <name type="scientific">Salmonella paratyphi A (strain ATCC 9150 / SARB42)</name>
    <dbReference type="NCBI Taxonomy" id="295319"/>
    <lineage>
        <taxon>Bacteria</taxon>
        <taxon>Pseudomonadati</taxon>
        <taxon>Pseudomonadota</taxon>
        <taxon>Gammaproteobacteria</taxon>
        <taxon>Enterobacterales</taxon>
        <taxon>Enterobacteriaceae</taxon>
        <taxon>Salmonella</taxon>
    </lineage>
</organism>
<evidence type="ECO:0000255" key="1">
    <source>
        <dbReference type="HAMAP-Rule" id="MF_01371"/>
    </source>
</evidence>
<evidence type="ECO:0000305" key="2"/>
<accession>Q5PK02</accession>
<reference key="1">
    <citation type="journal article" date="2004" name="Nat. Genet.">
        <title>Comparison of genome degradation in Paratyphi A and Typhi, human-restricted serovars of Salmonella enterica that cause typhoid.</title>
        <authorList>
            <person name="McClelland M."/>
            <person name="Sanderson K.E."/>
            <person name="Clifton S.W."/>
            <person name="Latreille P."/>
            <person name="Porwollik S."/>
            <person name="Sabo A."/>
            <person name="Meyer R."/>
            <person name="Bieri T."/>
            <person name="Ozersky P."/>
            <person name="McLellan M."/>
            <person name="Harkins C.R."/>
            <person name="Wang C."/>
            <person name="Nguyen C."/>
            <person name="Berghoff A."/>
            <person name="Elliott G."/>
            <person name="Kohlberg S."/>
            <person name="Strong C."/>
            <person name="Du F."/>
            <person name="Carter J."/>
            <person name="Kremizki C."/>
            <person name="Layman D."/>
            <person name="Leonard S."/>
            <person name="Sun H."/>
            <person name="Fulton L."/>
            <person name="Nash W."/>
            <person name="Miner T."/>
            <person name="Minx P."/>
            <person name="Delehaunty K."/>
            <person name="Fronick C."/>
            <person name="Magrini V."/>
            <person name="Nhan M."/>
            <person name="Warren W."/>
            <person name="Florea L."/>
            <person name="Spieth J."/>
            <person name="Wilson R.K."/>
        </authorList>
    </citation>
    <scope>NUCLEOTIDE SEQUENCE [LARGE SCALE GENOMIC DNA]</scope>
    <source>
        <strain>ATCC 9150 / SARB42</strain>
    </source>
</reference>
<dbReference type="EMBL" id="CP000026">
    <property type="protein sequence ID" value="AAV79104.1"/>
    <property type="molecule type" value="Genomic_DNA"/>
</dbReference>
<dbReference type="RefSeq" id="WP_001140434.1">
    <property type="nucleotide sequence ID" value="NC_006511.1"/>
</dbReference>
<dbReference type="SMR" id="Q5PK02"/>
<dbReference type="GeneID" id="97393185"/>
<dbReference type="KEGG" id="spt:SPA3288"/>
<dbReference type="HOGENOM" id="CLU_131047_1_4_6"/>
<dbReference type="Proteomes" id="UP000008185">
    <property type="component" value="Chromosome"/>
</dbReference>
<dbReference type="GO" id="GO:0022625">
    <property type="term" value="C:cytosolic large ribosomal subunit"/>
    <property type="evidence" value="ECO:0007669"/>
    <property type="project" value="TreeGrafter"/>
</dbReference>
<dbReference type="GO" id="GO:0003735">
    <property type="term" value="F:structural constituent of ribosome"/>
    <property type="evidence" value="ECO:0007669"/>
    <property type="project" value="InterPro"/>
</dbReference>
<dbReference type="GO" id="GO:0006412">
    <property type="term" value="P:translation"/>
    <property type="evidence" value="ECO:0007669"/>
    <property type="project" value="UniProtKB-UniRule"/>
</dbReference>
<dbReference type="CDD" id="cd01658">
    <property type="entry name" value="Ribosomal_L30"/>
    <property type="match status" value="1"/>
</dbReference>
<dbReference type="FunFam" id="3.30.1390.20:FF:000001">
    <property type="entry name" value="50S ribosomal protein L30"/>
    <property type="match status" value="1"/>
</dbReference>
<dbReference type="Gene3D" id="3.30.1390.20">
    <property type="entry name" value="Ribosomal protein L30, ferredoxin-like fold domain"/>
    <property type="match status" value="1"/>
</dbReference>
<dbReference type="HAMAP" id="MF_01371_B">
    <property type="entry name" value="Ribosomal_uL30_B"/>
    <property type="match status" value="1"/>
</dbReference>
<dbReference type="InterPro" id="IPR036919">
    <property type="entry name" value="Ribo_uL30_ferredoxin-like_sf"/>
</dbReference>
<dbReference type="InterPro" id="IPR005996">
    <property type="entry name" value="Ribosomal_uL30_bac-type"/>
</dbReference>
<dbReference type="InterPro" id="IPR018038">
    <property type="entry name" value="Ribosomal_uL30_CS"/>
</dbReference>
<dbReference type="InterPro" id="IPR016082">
    <property type="entry name" value="Ribosomal_uL30_ferredoxin-like"/>
</dbReference>
<dbReference type="NCBIfam" id="TIGR01308">
    <property type="entry name" value="rpmD_bact"/>
    <property type="match status" value="1"/>
</dbReference>
<dbReference type="PANTHER" id="PTHR15892:SF2">
    <property type="entry name" value="LARGE RIBOSOMAL SUBUNIT PROTEIN UL30M"/>
    <property type="match status" value="1"/>
</dbReference>
<dbReference type="PANTHER" id="PTHR15892">
    <property type="entry name" value="MITOCHONDRIAL RIBOSOMAL PROTEIN L30"/>
    <property type="match status" value="1"/>
</dbReference>
<dbReference type="Pfam" id="PF00327">
    <property type="entry name" value="Ribosomal_L30"/>
    <property type="match status" value="1"/>
</dbReference>
<dbReference type="PIRSF" id="PIRSF002211">
    <property type="entry name" value="Ribosomal_L30_bac-type"/>
    <property type="match status" value="1"/>
</dbReference>
<dbReference type="SUPFAM" id="SSF55129">
    <property type="entry name" value="Ribosomal protein L30p/L7e"/>
    <property type="match status" value="1"/>
</dbReference>
<dbReference type="PROSITE" id="PS00634">
    <property type="entry name" value="RIBOSOMAL_L30"/>
    <property type="match status" value="1"/>
</dbReference>
<sequence>MAKTIKITQTRSAIGRLPKHKATLLGLGLRRIGHTVEREDTPAVRGMVNAVSFMVKVEE</sequence>
<gene>
    <name evidence="1" type="primary">rpmD</name>
    <name type="ordered locus">SPA3288</name>
</gene>
<proteinExistence type="inferred from homology"/>
<keyword id="KW-0687">Ribonucleoprotein</keyword>
<keyword id="KW-0689">Ribosomal protein</keyword>
<comment type="subunit">
    <text evidence="1">Part of the 50S ribosomal subunit.</text>
</comment>
<comment type="similarity">
    <text evidence="1">Belongs to the universal ribosomal protein uL30 family.</text>
</comment>
<feature type="chain" id="PRO_0000273848" description="Large ribosomal subunit protein uL30">
    <location>
        <begin position="1"/>
        <end position="59"/>
    </location>
</feature>